<name>LSPA_ECO27</name>
<comment type="function">
    <text evidence="1">This protein specifically catalyzes the removal of signal peptides from prolipoproteins.</text>
</comment>
<comment type="catalytic activity">
    <reaction evidence="1">
        <text>Release of signal peptides from bacterial membrane prolipoproteins. Hydrolyzes -Xaa-Yaa-Zaa-|-(S,diacylglyceryl)Cys-, in which Xaa is hydrophobic (preferably Leu), and Yaa (Ala or Ser) and Zaa (Gly or Ala) have small, neutral side chains.</text>
        <dbReference type="EC" id="3.4.23.36"/>
    </reaction>
</comment>
<comment type="pathway">
    <text evidence="1">Protein modification; lipoprotein biosynthesis (signal peptide cleavage).</text>
</comment>
<comment type="subcellular location">
    <subcellularLocation>
        <location evidence="1">Cell inner membrane</location>
        <topology evidence="1">Multi-pass membrane protein</topology>
    </subcellularLocation>
</comment>
<comment type="similarity">
    <text evidence="1">Belongs to the peptidase A8 family.</text>
</comment>
<accession>B7UI72</accession>
<reference key="1">
    <citation type="journal article" date="2009" name="J. Bacteriol.">
        <title>Complete genome sequence and comparative genome analysis of enteropathogenic Escherichia coli O127:H6 strain E2348/69.</title>
        <authorList>
            <person name="Iguchi A."/>
            <person name="Thomson N.R."/>
            <person name="Ogura Y."/>
            <person name="Saunders D."/>
            <person name="Ooka T."/>
            <person name="Henderson I.R."/>
            <person name="Harris D."/>
            <person name="Asadulghani M."/>
            <person name="Kurokawa K."/>
            <person name="Dean P."/>
            <person name="Kenny B."/>
            <person name="Quail M.A."/>
            <person name="Thurston S."/>
            <person name="Dougan G."/>
            <person name="Hayashi T."/>
            <person name="Parkhill J."/>
            <person name="Frankel G."/>
        </authorList>
    </citation>
    <scope>NUCLEOTIDE SEQUENCE [LARGE SCALE GENOMIC DNA]</scope>
    <source>
        <strain>E2348/69 / EPEC</strain>
    </source>
</reference>
<proteinExistence type="inferred from homology"/>
<evidence type="ECO:0000255" key="1">
    <source>
        <dbReference type="HAMAP-Rule" id="MF_00161"/>
    </source>
</evidence>
<protein>
    <recommendedName>
        <fullName evidence="1">Lipoprotein signal peptidase</fullName>
        <ecNumber evidence="1">3.4.23.36</ecNumber>
    </recommendedName>
    <alternativeName>
        <fullName evidence="1">Prolipoprotein signal peptidase</fullName>
    </alternativeName>
    <alternativeName>
        <fullName evidence="1">Signal peptidase II</fullName>
        <shortName evidence="1">SPase II</shortName>
    </alternativeName>
</protein>
<organism>
    <name type="scientific">Escherichia coli O127:H6 (strain E2348/69 / EPEC)</name>
    <dbReference type="NCBI Taxonomy" id="574521"/>
    <lineage>
        <taxon>Bacteria</taxon>
        <taxon>Pseudomonadati</taxon>
        <taxon>Pseudomonadota</taxon>
        <taxon>Gammaproteobacteria</taxon>
        <taxon>Enterobacterales</taxon>
        <taxon>Enterobacteriaceae</taxon>
        <taxon>Escherichia</taxon>
    </lineage>
</organism>
<dbReference type="EC" id="3.4.23.36" evidence="1"/>
<dbReference type="EMBL" id="FM180568">
    <property type="protein sequence ID" value="CAS07575.1"/>
    <property type="molecule type" value="Genomic_DNA"/>
</dbReference>
<dbReference type="RefSeq" id="WP_000083369.1">
    <property type="nucleotide sequence ID" value="NC_011601.1"/>
</dbReference>
<dbReference type="SMR" id="B7UI72"/>
<dbReference type="MEROPS" id="A08.001"/>
<dbReference type="GeneID" id="75169926"/>
<dbReference type="KEGG" id="ecg:E2348C_0027"/>
<dbReference type="HOGENOM" id="CLU_083252_4_0_6"/>
<dbReference type="UniPathway" id="UPA00665"/>
<dbReference type="Proteomes" id="UP000008205">
    <property type="component" value="Chromosome"/>
</dbReference>
<dbReference type="GO" id="GO:0005886">
    <property type="term" value="C:plasma membrane"/>
    <property type="evidence" value="ECO:0007669"/>
    <property type="project" value="UniProtKB-SubCell"/>
</dbReference>
<dbReference type="GO" id="GO:0004190">
    <property type="term" value="F:aspartic-type endopeptidase activity"/>
    <property type="evidence" value="ECO:0007669"/>
    <property type="project" value="UniProtKB-UniRule"/>
</dbReference>
<dbReference type="GO" id="GO:0006508">
    <property type="term" value="P:proteolysis"/>
    <property type="evidence" value="ECO:0007669"/>
    <property type="project" value="UniProtKB-KW"/>
</dbReference>
<dbReference type="HAMAP" id="MF_00161">
    <property type="entry name" value="LspA"/>
    <property type="match status" value="1"/>
</dbReference>
<dbReference type="InterPro" id="IPR001872">
    <property type="entry name" value="Peptidase_A8"/>
</dbReference>
<dbReference type="NCBIfam" id="TIGR00077">
    <property type="entry name" value="lspA"/>
    <property type="match status" value="1"/>
</dbReference>
<dbReference type="PANTHER" id="PTHR33695">
    <property type="entry name" value="LIPOPROTEIN SIGNAL PEPTIDASE"/>
    <property type="match status" value="1"/>
</dbReference>
<dbReference type="PANTHER" id="PTHR33695:SF1">
    <property type="entry name" value="LIPOPROTEIN SIGNAL PEPTIDASE"/>
    <property type="match status" value="1"/>
</dbReference>
<dbReference type="Pfam" id="PF01252">
    <property type="entry name" value="Peptidase_A8"/>
    <property type="match status" value="1"/>
</dbReference>
<dbReference type="PRINTS" id="PR00781">
    <property type="entry name" value="LIPOSIGPTASE"/>
</dbReference>
<dbReference type="PROSITE" id="PS00855">
    <property type="entry name" value="SPASE_II"/>
    <property type="match status" value="1"/>
</dbReference>
<gene>
    <name evidence="1" type="primary">lspA</name>
    <name type="ordered locus">E2348C_0027</name>
</gene>
<sequence>MSQSICSTGLRWLWLVVVVLIIDLGSKYLILQNFALGDTVPLFPSLNLHYARNYGAAFSFLADSGGWQRWFFAGIAIGISVILAVMMYRSKATQKLNNIAYALIIGGALGNLFDRLWHGFVVDMIDFYVGDWHFATFNLADTAICVGAALIVLEGFLPSKAKKQ</sequence>
<keyword id="KW-0064">Aspartyl protease</keyword>
<keyword id="KW-0997">Cell inner membrane</keyword>
<keyword id="KW-1003">Cell membrane</keyword>
<keyword id="KW-0378">Hydrolase</keyword>
<keyword id="KW-0472">Membrane</keyword>
<keyword id="KW-0645">Protease</keyword>
<keyword id="KW-1185">Reference proteome</keyword>
<keyword id="KW-0812">Transmembrane</keyword>
<keyword id="KW-1133">Transmembrane helix</keyword>
<feature type="chain" id="PRO_1000123495" description="Lipoprotein signal peptidase">
    <location>
        <begin position="1"/>
        <end position="164"/>
    </location>
</feature>
<feature type="transmembrane region" description="Helical" evidence="1">
    <location>
        <begin position="12"/>
        <end position="32"/>
    </location>
</feature>
<feature type="transmembrane region" description="Helical" evidence="1">
    <location>
        <begin position="70"/>
        <end position="90"/>
    </location>
</feature>
<feature type="transmembrane region" description="Helical" evidence="1">
    <location>
        <begin position="102"/>
        <end position="122"/>
    </location>
</feature>
<feature type="transmembrane region" description="Helical" evidence="1">
    <location>
        <begin position="137"/>
        <end position="157"/>
    </location>
</feature>
<feature type="active site" evidence="1">
    <location>
        <position position="123"/>
    </location>
</feature>
<feature type="active site" evidence="1">
    <location>
        <position position="141"/>
    </location>
</feature>